<sequence>MIQKNWQELIKPNKVDFITHGSRTHATVVAEPLERGFGLTLGNALRRVLLSSLRGAAVTAVQIDGVLHEFSSIPGVREDVTDIVLNIKEIAIRMEGEGPKRMVVRKEGPGVVTAGDIQTVGDVEILNPEHVICTLDEGAEIRMEFTVNTGKGYVPADRNRAEDAPIGLIPVDSLYSPVRKVSYKIENTREGQVLDYDKLTLNIETNGSVTGEDAVAYAARILQDQLSIFVNFEEPQKEAPQEQVAELAFNPALLKKVDELELSVRSANCLKTDNIVYIGDLIQKTEAEMLRTPNFGRKSLNEIKEVLASMGLHLGMEIPAWPPENIEDLAKRYEDQY</sequence>
<proteinExistence type="inferred from homology"/>
<keyword id="KW-0240">DNA-directed RNA polymerase</keyword>
<keyword id="KW-0548">Nucleotidyltransferase</keyword>
<keyword id="KW-0804">Transcription</keyword>
<keyword id="KW-0808">Transferase</keyword>
<feature type="chain" id="PRO_0000175278" description="DNA-directed RNA polymerase subunit alpha">
    <location>
        <begin position="1"/>
        <end position="337"/>
    </location>
</feature>
<feature type="region of interest" description="Alpha N-terminal domain (alpha-NTD)" evidence="1">
    <location>
        <begin position="1"/>
        <end position="233"/>
    </location>
</feature>
<feature type="region of interest" description="Alpha C-terminal domain (alpha-CTD)" evidence="1">
    <location>
        <begin position="249"/>
        <end position="337"/>
    </location>
</feature>
<protein>
    <recommendedName>
        <fullName evidence="1">DNA-directed RNA polymerase subunit alpha</fullName>
        <shortName evidence="1">RNAP subunit alpha</shortName>
        <ecNumber evidence="1">2.7.7.6</ecNumber>
    </recommendedName>
    <alternativeName>
        <fullName evidence="1">RNA polymerase subunit alpha</fullName>
    </alternativeName>
    <alternativeName>
        <fullName evidence="1">Transcriptase subunit alpha</fullName>
    </alternativeName>
</protein>
<evidence type="ECO:0000255" key="1">
    <source>
        <dbReference type="HAMAP-Rule" id="MF_00059"/>
    </source>
</evidence>
<accession>Q8G094</accession>
<accession>G0KAD0</accession>
<gene>
    <name evidence="1" type="primary">rpoA</name>
    <name type="ordered locus">BR1209</name>
    <name type="ordered locus">BS1330_I1205</name>
</gene>
<comment type="function">
    <text evidence="1">DNA-dependent RNA polymerase catalyzes the transcription of DNA into RNA using the four ribonucleoside triphosphates as substrates.</text>
</comment>
<comment type="catalytic activity">
    <reaction evidence="1">
        <text>RNA(n) + a ribonucleoside 5'-triphosphate = RNA(n+1) + diphosphate</text>
        <dbReference type="Rhea" id="RHEA:21248"/>
        <dbReference type="Rhea" id="RHEA-COMP:14527"/>
        <dbReference type="Rhea" id="RHEA-COMP:17342"/>
        <dbReference type="ChEBI" id="CHEBI:33019"/>
        <dbReference type="ChEBI" id="CHEBI:61557"/>
        <dbReference type="ChEBI" id="CHEBI:140395"/>
        <dbReference type="EC" id="2.7.7.6"/>
    </reaction>
</comment>
<comment type="subunit">
    <text evidence="1">Homodimer. The RNAP catalytic core consists of 2 alpha, 1 beta, 1 beta' and 1 omega subunit. When a sigma factor is associated with the core the holoenzyme is formed, which can initiate transcription.</text>
</comment>
<comment type="domain">
    <text evidence="1">The N-terminal domain is essential for RNAP assembly and basal transcription, whereas the C-terminal domain is involved in interaction with transcriptional regulators and with upstream promoter elements.</text>
</comment>
<comment type="similarity">
    <text evidence="1">Belongs to the RNA polymerase alpha chain family.</text>
</comment>
<organism>
    <name type="scientific">Brucella suis biovar 1 (strain 1330)</name>
    <dbReference type="NCBI Taxonomy" id="204722"/>
    <lineage>
        <taxon>Bacteria</taxon>
        <taxon>Pseudomonadati</taxon>
        <taxon>Pseudomonadota</taxon>
        <taxon>Alphaproteobacteria</taxon>
        <taxon>Hyphomicrobiales</taxon>
        <taxon>Brucellaceae</taxon>
        <taxon>Brucella/Ochrobactrum group</taxon>
        <taxon>Brucella</taxon>
    </lineage>
</organism>
<name>RPOA_BRUSU</name>
<reference key="1">
    <citation type="journal article" date="2002" name="Proc. Natl. Acad. Sci. U.S.A.">
        <title>The Brucella suis genome reveals fundamental similarities between animal and plant pathogens and symbionts.</title>
        <authorList>
            <person name="Paulsen I.T."/>
            <person name="Seshadri R."/>
            <person name="Nelson K.E."/>
            <person name="Eisen J.A."/>
            <person name="Heidelberg J.F."/>
            <person name="Read T.D."/>
            <person name="Dodson R.J."/>
            <person name="Umayam L.A."/>
            <person name="Brinkac L.M."/>
            <person name="Beanan M.J."/>
            <person name="Daugherty S.C."/>
            <person name="DeBoy R.T."/>
            <person name="Durkin A.S."/>
            <person name="Kolonay J.F."/>
            <person name="Madupu R."/>
            <person name="Nelson W.C."/>
            <person name="Ayodeji B."/>
            <person name="Kraul M."/>
            <person name="Shetty J."/>
            <person name="Malek J.A."/>
            <person name="Van Aken S.E."/>
            <person name="Riedmuller S."/>
            <person name="Tettelin H."/>
            <person name="Gill S.R."/>
            <person name="White O."/>
            <person name="Salzberg S.L."/>
            <person name="Hoover D.L."/>
            <person name="Lindler L.E."/>
            <person name="Halling S.M."/>
            <person name="Boyle S.M."/>
            <person name="Fraser C.M."/>
        </authorList>
    </citation>
    <scope>NUCLEOTIDE SEQUENCE [LARGE SCALE GENOMIC DNA]</scope>
    <source>
        <strain>1330</strain>
    </source>
</reference>
<reference key="2">
    <citation type="journal article" date="2011" name="J. Bacteriol.">
        <title>Revised genome sequence of Brucella suis 1330.</title>
        <authorList>
            <person name="Tae H."/>
            <person name="Shallom S."/>
            <person name="Settlage R."/>
            <person name="Preston D."/>
            <person name="Adams L.G."/>
            <person name="Garner H.R."/>
        </authorList>
    </citation>
    <scope>NUCLEOTIDE SEQUENCE [LARGE SCALE GENOMIC DNA]</scope>
    <source>
        <strain>1330</strain>
    </source>
</reference>
<dbReference type="EC" id="2.7.7.6" evidence="1"/>
<dbReference type="EMBL" id="AE014291">
    <property type="protein sequence ID" value="AAN30128.1"/>
    <property type="molecule type" value="Genomic_DNA"/>
</dbReference>
<dbReference type="EMBL" id="CP002997">
    <property type="protein sequence ID" value="AEM18546.1"/>
    <property type="molecule type" value="Genomic_DNA"/>
</dbReference>
<dbReference type="RefSeq" id="WP_004690913.1">
    <property type="nucleotide sequence ID" value="NZ_KN046804.1"/>
</dbReference>
<dbReference type="SMR" id="Q8G094"/>
<dbReference type="GeneID" id="45052244"/>
<dbReference type="KEGG" id="bms:BR1209"/>
<dbReference type="KEGG" id="bsi:BS1330_I1205"/>
<dbReference type="PATRIC" id="fig|204722.21.peg.2267"/>
<dbReference type="HOGENOM" id="CLU_053084_0_0_5"/>
<dbReference type="PhylomeDB" id="Q8G094"/>
<dbReference type="PRO" id="PR:Q8G094"/>
<dbReference type="Proteomes" id="UP000007104">
    <property type="component" value="Chromosome I"/>
</dbReference>
<dbReference type="GO" id="GO:0005737">
    <property type="term" value="C:cytoplasm"/>
    <property type="evidence" value="ECO:0007669"/>
    <property type="project" value="UniProtKB-ARBA"/>
</dbReference>
<dbReference type="GO" id="GO:0000428">
    <property type="term" value="C:DNA-directed RNA polymerase complex"/>
    <property type="evidence" value="ECO:0007669"/>
    <property type="project" value="UniProtKB-KW"/>
</dbReference>
<dbReference type="GO" id="GO:0003677">
    <property type="term" value="F:DNA binding"/>
    <property type="evidence" value="ECO:0007669"/>
    <property type="project" value="UniProtKB-UniRule"/>
</dbReference>
<dbReference type="GO" id="GO:0003899">
    <property type="term" value="F:DNA-directed RNA polymerase activity"/>
    <property type="evidence" value="ECO:0007669"/>
    <property type="project" value="UniProtKB-UniRule"/>
</dbReference>
<dbReference type="GO" id="GO:0046983">
    <property type="term" value="F:protein dimerization activity"/>
    <property type="evidence" value="ECO:0007669"/>
    <property type="project" value="InterPro"/>
</dbReference>
<dbReference type="GO" id="GO:0006351">
    <property type="term" value="P:DNA-templated transcription"/>
    <property type="evidence" value="ECO:0007669"/>
    <property type="project" value="UniProtKB-UniRule"/>
</dbReference>
<dbReference type="CDD" id="cd06928">
    <property type="entry name" value="RNAP_alpha_NTD"/>
    <property type="match status" value="1"/>
</dbReference>
<dbReference type="FunFam" id="1.10.150.20:FF:000001">
    <property type="entry name" value="DNA-directed RNA polymerase subunit alpha"/>
    <property type="match status" value="1"/>
</dbReference>
<dbReference type="FunFam" id="2.170.120.12:FF:000001">
    <property type="entry name" value="DNA-directed RNA polymerase subunit alpha"/>
    <property type="match status" value="1"/>
</dbReference>
<dbReference type="Gene3D" id="1.10.150.20">
    <property type="entry name" value="5' to 3' exonuclease, C-terminal subdomain"/>
    <property type="match status" value="1"/>
</dbReference>
<dbReference type="Gene3D" id="2.170.120.12">
    <property type="entry name" value="DNA-directed RNA polymerase, insert domain"/>
    <property type="match status" value="1"/>
</dbReference>
<dbReference type="Gene3D" id="3.30.1360.10">
    <property type="entry name" value="RNA polymerase, RBP11-like subunit"/>
    <property type="match status" value="1"/>
</dbReference>
<dbReference type="HAMAP" id="MF_00059">
    <property type="entry name" value="RNApol_bact_RpoA"/>
    <property type="match status" value="1"/>
</dbReference>
<dbReference type="InterPro" id="IPR011262">
    <property type="entry name" value="DNA-dir_RNA_pol_insert"/>
</dbReference>
<dbReference type="InterPro" id="IPR011263">
    <property type="entry name" value="DNA-dir_RNA_pol_RpoA/D/Rpb3"/>
</dbReference>
<dbReference type="InterPro" id="IPR011773">
    <property type="entry name" value="DNA-dir_RpoA"/>
</dbReference>
<dbReference type="InterPro" id="IPR036603">
    <property type="entry name" value="RBP11-like"/>
</dbReference>
<dbReference type="InterPro" id="IPR011260">
    <property type="entry name" value="RNAP_asu_C"/>
</dbReference>
<dbReference type="InterPro" id="IPR036643">
    <property type="entry name" value="RNApol_insert_sf"/>
</dbReference>
<dbReference type="NCBIfam" id="NF003513">
    <property type="entry name" value="PRK05182.1-2"/>
    <property type="match status" value="1"/>
</dbReference>
<dbReference type="NCBIfam" id="NF003519">
    <property type="entry name" value="PRK05182.2-5"/>
    <property type="match status" value="1"/>
</dbReference>
<dbReference type="NCBIfam" id="TIGR02027">
    <property type="entry name" value="rpoA"/>
    <property type="match status" value="1"/>
</dbReference>
<dbReference type="Pfam" id="PF01000">
    <property type="entry name" value="RNA_pol_A_bac"/>
    <property type="match status" value="1"/>
</dbReference>
<dbReference type="Pfam" id="PF03118">
    <property type="entry name" value="RNA_pol_A_CTD"/>
    <property type="match status" value="1"/>
</dbReference>
<dbReference type="Pfam" id="PF01193">
    <property type="entry name" value="RNA_pol_L"/>
    <property type="match status" value="1"/>
</dbReference>
<dbReference type="SMART" id="SM00662">
    <property type="entry name" value="RPOLD"/>
    <property type="match status" value="1"/>
</dbReference>
<dbReference type="SUPFAM" id="SSF47789">
    <property type="entry name" value="C-terminal domain of RNA polymerase alpha subunit"/>
    <property type="match status" value="1"/>
</dbReference>
<dbReference type="SUPFAM" id="SSF56553">
    <property type="entry name" value="Insert subdomain of RNA polymerase alpha subunit"/>
    <property type="match status" value="1"/>
</dbReference>
<dbReference type="SUPFAM" id="SSF55257">
    <property type="entry name" value="RBP11-like subunits of RNA polymerase"/>
    <property type="match status" value="1"/>
</dbReference>